<evidence type="ECO:0000255" key="1">
    <source>
        <dbReference type="HAMAP-Rule" id="MF_00480"/>
    </source>
</evidence>
<evidence type="ECO:0000305" key="2"/>
<dbReference type="EMBL" id="CP000097">
    <property type="protein sequence ID" value="ABB26978.1"/>
    <property type="molecule type" value="Genomic_DNA"/>
</dbReference>
<dbReference type="RefSeq" id="WP_009788869.1">
    <property type="nucleotide sequence ID" value="NC_007513.1"/>
</dbReference>
<dbReference type="SMR" id="Q3AW55"/>
<dbReference type="STRING" id="316279.Syncc9902_2020"/>
<dbReference type="KEGG" id="sye:Syncc9902_2020"/>
<dbReference type="eggNOG" id="COG0049">
    <property type="taxonomic scope" value="Bacteria"/>
</dbReference>
<dbReference type="HOGENOM" id="CLU_072226_1_1_3"/>
<dbReference type="OrthoDB" id="9807653at2"/>
<dbReference type="Proteomes" id="UP000002712">
    <property type="component" value="Chromosome"/>
</dbReference>
<dbReference type="GO" id="GO:0015935">
    <property type="term" value="C:small ribosomal subunit"/>
    <property type="evidence" value="ECO:0007669"/>
    <property type="project" value="InterPro"/>
</dbReference>
<dbReference type="GO" id="GO:0019843">
    <property type="term" value="F:rRNA binding"/>
    <property type="evidence" value="ECO:0007669"/>
    <property type="project" value="UniProtKB-UniRule"/>
</dbReference>
<dbReference type="GO" id="GO:0003735">
    <property type="term" value="F:structural constituent of ribosome"/>
    <property type="evidence" value="ECO:0007669"/>
    <property type="project" value="InterPro"/>
</dbReference>
<dbReference type="GO" id="GO:0000049">
    <property type="term" value="F:tRNA binding"/>
    <property type="evidence" value="ECO:0007669"/>
    <property type="project" value="UniProtKB-UniRule"/>
</dbReference>
<dbReference type="GO" id="GO:0006412">
    <property type="term" value="P:translation"/>
    <property type="evidence" value="ECO:0007669"/>
    <property type="project" value="UniProtKB-UniRule"/>
</dbReference>
<dbReference type="CDD" id="cd14869">
    <property type="entry name" value="uS7_Bacteria"/>
    <property type="match status" value="1"/>
</dbReference>
<dbReference type="FunFam" id="1.10.455.10:FF:000001">
    <property type="entry name" value="30S ribosomal protein S7"/>
    <property type="match status" value="1"/>
</dbReference>
<dbReference type="Gene3D" id="1.10.455.10">
    <property type="entry name" value="Ribosomal protein S7 domain"/>
    <property type="match status" value="1"/>
</dbReference>
<dbReference type="HAMAP" id="MF_00480_B">
    <property type="entry name" value="Ribosomal_uS7_B"/>
    <property type="match status" value="1"/>
</dbReference>
<dbReference type="InterPro" id="IPR000235">
    <property type="entry name" value="Ribosomal_uS7"/>
</dbReference>
<dbReference type="InterPro" id="IPR005717">
    <property type="entry name" value="Ribosomal_uS7_bac/org-type"/>
</dbReference>
<dbReference type="InterPro" id="IPR020606">
    <property type="entry name" value="Ribosomal_uS7_CS"/>
</dbReference>
<dbReference type="InterPro" id="IPR023798">
    <property type="entry name" value="Ribosomal_uS7_dom"/>
</dbReference>
<dbReference type="InterPro" id="IPR036823">
    <property type="entry name" value="Ribosomal_uS7_dom_sf"/>
</dbReference>
<dbReference type="NCBIfam" id="TIGR01029">
    <property type="entry name" value="rpsG_bact"/>
    <property type="match status" value="1"/>
</dbReference>
<dbReference type="PANTHER" id="PTHR11205">
    <property type="entry name" value="RIBOSOMAL PROTEIN S7"/>
    <property type="match status" value="1"/>
</dbReference>
<dbReference type="Pfam" id="PF00177">
    <property type="entry name" value="Ribosomal_S7"/>
    <property type="match status" value="1"/>
</dbReference>
<dbReference type="PIRSF" id="PIRSF002122">
    <property type="entry name" value="RPS7p_RPS7a_RPS5e_RPS7o"/>
    <property type="match status" value="1"/>
</dbReference>
<dbReference type="SUPFAM" id="SSF47973">
    <property type="entry name" value="Ribosomal protein S7"/>
    <property type="match status" value="1"/>
</dbReference>
<dbReference type="PROSITE" id="PS00052">
    <property type="entry name" value="RIBOSOMAL_S7"/>
    <property type="match status" value="1"/>
</dbReference>
<accession>Q3AW55</accession>
<keyword id="KW-1185">Reference proteome</keyword>
<keyword id="KW-0687">Ribonucleoprotein</keyword>
<keyword id="KW-0689">Ribosomal protein</keyword>
<keyword id="KW-0694">RNA-binding</keyword>
<keyword id="KW-0699">rRNA-binding</keyword>
<keyword id="KW-0820">tRNA-binding</keyword>
<name>RS7_SYNS9</name>
<feature type="chain" id="PRO_0000241780" description="Small ribosomal subunit protein uS7">
    <location>
        <begin position="1"/>
        <end position="156"/>
    </location>
</feature>
<organism>
    <name type="scientific">Synechococcus sp. (strain CC9902)</name>
    <dbReference type="NCBI Taxonomy" id="316279"/>
    <lineage>
        <taxon>Bacteria</taxon>
        <taxon>Bacillati</taxon>
        <taxon>Cyanobacteriota</taxon>
        <taxon>Cyanophyceae</taxon>
        <taxon>Synechococcales</taxon>
        <taxon>Synechococcaceae</taxon>
        <taxon>Synechococcus</taxon>
    </lineage>
</organism>
<comment type="function">
    <text evidence="1">One of the primary rRNA binding proteins, it binds directly to 16S rRNA where it nucleates assembly of the head domain of the 30S subunit. Is located at the subunit interface close to the decoding center, probably blocks exit of the E-site tRNA.</text>
</comment>
<comment type="subunit">
    <text evidence="1">Part of the 30S ribosomal subunit. Contacts proteins S9 and S11.</text>
</comment>
<comment type="similarity">
    <text evidence="1">Belongs to the universal ribosomal protein uS7 family.</text>
</comment>
<proteinExistence type="inferred from homology"/>
<reference key="1">
    <citation type="submission" date="2005-08" db="EMBL/GenBank/DDBJ databases">
        <title>Complete sequence of Synechococcus sp. CC9902.</title>
        <authorList>
            <person name="Copeland A."/>
            <person name="Lucas S."/>
            <person name="Lapidus A."/>
            <person name="Barry K."/>
            <person name="Detter J.C."/>
            <person name="Glavina T."/>
            <person name="Hammon N."/>
            <person name="Israni S."/>
            <person name="Pitluck S."/>
            <person name="Martinez M."/>
            <person name="Schmutz J."/>
            <person name="Larimer F."/>
            <person name="Land M."/>
            <person name="Kyrpides N."/>
            <person name="Ivanova N."/>
            <person name="Richardson P."/>
        </authorList>
    </citation>
    <scope>NUCLEOTIDE SEQUENCE [LARGE SCALE GENOMIC DNA]</scope>
    <source>
        <strain>CC9902</strain>
    </source>
</reference>
<sequence length="156" mass="17461">MSRRNAAVKRPILPDPQFNSRLATMMVARLMQHGKKSTAQRILSDAFGLINERTGGDPLELFETAVKNATPLVEVRARRVGGATYQVPMEVRQERGTAMALRWLVSFSRARNGRSMSQKLAGELMDAANEAGSAVRKREETHKMAEANKAFAHYRY</sequence>
<protein>
    <recommendedName>
        <fullName evidence="1">Small ribosomal subunit protein uS7</fullName>
    </recommendedName>
    <alternativeName>
        <fullName evidence="2">30S ribosomal protein S7</fullName>
    </alternativeName>
</protein>
<gene>
    <name evidence="1" type="primary">rpsG</name>
    <name evidence="1" type="synonym">rps7</name>
    <name type="ordered locus">Syncc9902_2020</name>
</gene>